<gene>
    <name type="primary">lonp2</name>
    <name type="ORF">zgc:92557</name>
</gene>
<comment type="function">
    <text evidence="1">ATP-dependent serine protease that mediates the selective degradation of misfolded and unassembled polypeptides in the peroxisomal matrix. Necessary for type 2 peroxisome targeting signal (PTS2)-containing protein processing and facilitates peroxisome matrix protein import.</text>
</comment>
<comment type="catalytic activity">
    <reaction evidence="1">
        <text>Hydrolysis of proteins in presence of ATP.</text>
        <dbReference type="EC" id="3.4.21.53"/>
    </reaction>
</comment>
<comment type="subcellular location">
    <subcellularLocation>
        <location evidence="1">Peroxisome matrix</location>
    </subcellularLocation>
</comment>
<comment type="similarity">
    <text evidence="1">Belongs to the peptidase S16 family.</text>
</comment>
<organism>
    <name type="scientific">Danio rerio</name>
    <name type="common">Zebrafish</name>
    <name type="synonym">Brachydanio rerio</name>
    <dbReference type="NCBI Taxonomy" id="7955"/>
    <lineage>
        <taxon>Eukaryota</taxon>
        <taxon>Metazoa</taxon>
        <taxon>Chordata</taxon>
        <taxon>Craniata</taxon>
        <taxon>Vertebrata</taxon>
        <taxon>Euteleostomi</taxon>
        <taxon>Actinopterygii</taxon>
        <taxon>Neopterygii</taxon>
        <taxon>Teleostei</taxon>
        <taxon>Ostariophysi</taxon>
        <taxon>Cypriniformes</taxon>
        <taxon>Danionidae</taxon>
        <taxon>Danioninae</taxon>
        <taxon>Danio</taxon>
    </lineage>
</organism>
<evidence type="ECO:0000255" key="1">
    <source>
        <dbReference type="HAMAP-Rule" id="MF_03121"/>
    </source>
</evidence>
<evidence type="ECO:0000255" key="2">
    <source>
        <dbReference type="PROSITE-ProRule" id="PRU01122"/>
    </source>
</evidence>
<evidence type="ECO:0000255" key="3">
    <source>
        <dbReference type="PROSITE-ProRule" id="PRU01123"/>
    </source>
</evidence>
<evidence type="ECO:0000256" key="4">
    <source>
        <dbReference type="SAM" id="MobiDB-lite"/>
    </source>
</evidence>
<protein>
    <recommendedName>
        <fullName evidence="1">Lon protease homolog 2, peroxisomal</fullName>
        <ecNumber evidence="1">3.4.21.53</ecNumber>
    </recommendedName>
</protein>
<dbReference type="EC" id="3.4.21.53" evidence="1"/>
<dbReference type="EMBL" id="BC086968">
    <property type="protein sequence ID" value="AAH86968.1"/>
    <property type="molecule type" value="mRNA"/>
</dbReference>
<dbReference type="RefSeq" id="NP_001008573.1">
    <property type="nucleotide sequence ID" value="NM_001008573.2"/>
</dbReference>
<dbReference type="SMR" id="Q5PQY6"/>
<dbReference type="FunCoup" id="Q5PQY6">
    <property type="interactions" value="466"/>
</dbReference>
<dbReference type="STRING" id="7955.ENSDARP00000140082"/>
<dbReference type="PaxDb" id="7955-ENSDARP00000036252"/>
<dbReference type="GeneID" id="494030"/>
<dbReference type="KEGG" id="dre:494030"/>
<dbReference type="AGR" id="ZFIN:ZDB-GENE-041212-1"/>
<dbReference type="CTD" id="83752"/>
<dbReference type="ZFIN" id="ZDB-GENE-041212-1">
    <property type="gene designation" value="lonp2"/>
</dbReference>
<dbReference type="eggNOG" id="KOG2004">
    <property type="taxonomic scope" value="Eukaryota"/>
</dbReference>
<dbReference type="InParanoid" id="Q5PQY6"/>
<dbReference type="OrthoDB" id="2411602at2759"/>
<dbReference type="PhylomeDB" id="Q5PQY6"/>
<dbReference type="PRO" id="PR:Q5PQY6"/>
<dbReference type="Proteomes" id="UP000000437">
    <property type="component" value="Chromosome 18"/>
</dbReference>
<dbReference type="GO" id="GO:0005782">
    <property type="term" value="C:peroxisomal matrix"/>
    <property type="evidence" value="ECO:0000318"/>
    <property type="project" value="GO_Central"/>
</dbReference>
<dbReference type="GO" id="GO:0005524">
    <property type="term" value="F:ATP binding"/>
    <property type="evidence" value="ECO:0007669"/>
    <property type="project" value="UniProtKB-UniRule"/>
</dbReference>
<dbReference type="GO" id="GO:0016887">
    <property type="term" value="F:ATP hydrolysis activity"/>
    <property type="evidence" value="ECO:0007669"/>
    <property type="project" value="UniProtKB-UniRule"/>
</dbReference>
<dbReference type="GO" id="GO:0004176">
    <property type="term" value="F:ATP-dependent peptidase activity"/>
    <property type="evidence" value="ECO:0007669"/>
    <property type="project" value="UniProtKB-UniRule"/>
</dbReference>
<dbReference type="GO" id="GO:0004252">
    <property type="term" value="F:serine-type endopeptidase activity"/>
    <property type="evidence" value="ECO:0007669"/>
    <property type="project" value="UniProtKB-UniRule"/>
</dbReference>
<dbReference type="GO" id="GO:0009653">
    <property type="term" value="P:anatomical structure morphogenesis"/>
    <property type="evidence" value="ECO:0007669"/>
    <property type="project" value="UniProtKB-ARBA"/>
</dbReference>
<dbReference type="GO" id="GO:0016558">
    <property type="term" value="P:protein import into peroxisome matrix"/>
    <property type="evidence" value="ECO:0007669"/>
    <property type="project" value="UniProtKB-UniRule"/>
</dbReference>
<dbReference type="GO" id="GO:0016485">
    <property type="term" value="P:protein processing"/>
    <property type="evidence" value="ECO:0000318"/>
    <property type="project" value="GO_Central"/>
</dbReference>
<dbReference type="GO" id="GO:0006515">
    <property type="term" value="P:protein quality control for misfolded or incompletely synthesized proteins"/>
    <property type="evidence" value="ECO:0007669"/>
    <property type="project" value="UniProtKB-UniRule"/>
</dbReference>
<dbReference type="GO" id="GO:0006625">
    <property type="term" value="P:protein targeting to peroxisome"/>
    <property type="evidence" value="ECO:0000318"/>
    <property type="project" value="GO_Central"/>
</dbReference>
<dbReference type="CDD" id="cd19500">
    <property type="entry name" value="RecA-like_Lon"/>
    <property type="match status" value="1"/>
</dbReference>
<dbReference type="FunFam" id="1.10.8.60:FF:000207">
    <property type="entry name" value="Lon protease homolog 2, peroxisomal"/>
    <property type="match status" value="1"/>
</dbReference>
<dbReference type="FunFam" id="1.20.5.5270:FF:000003">
    <property type="entry name" value="Lon protease homolog 2, peroxisomal"/>
    <property type="match status" value="1"/>
</dbReference>
<dbReference type="FunFam" id="2.30.130.40:FF:000003">
    <property type="entry name" value="Lon protease homolog 2, peroxisomal"/>
    <property type="match status" value="1"/>
</dbReference>
<dbReference type="FunFam" id="3.30.230.10:FF:000019">
    <property type="entry name" value="Lon protease homolog 2, peroxisomal"/>
    <property type="match status" value="1"/>
</dbReference>
<dbReference type="FunFam" id="3.40.50.300:FF:000382">
    <property type="entry name" value="Lon protease homolog 2, peroxisomal"/>
    <property type="match status" value="1"/>
</dbReference>
<dbReference type="Gene3D" id="1.10.8.60">
    <property type="match status" value="1"/>
</dbReference>
<dbReference type="Gene3D" id="1.20.5.5270">
    <property type="match status" value="1"/>
</dbReference>
<dbReference type="Gene3D" id="1.20.58.1480">
    <property type="match status" value="1"/>
</dbReference>
<dbReference type="Gene3D" id="3.30.230.10">
    <property type="match status" value="1"/>
</dbReference>
<dbReference type="Gene3D" id="2.30.130.40">
    <property type="entry name" value="LON domain-like"/>
    <property type="match status" value="1"/>
</dbReference>
<dbReference type="Gene3D" id="3.40.50.300">
    <property type="entry name" value="P-loop containing nucleotide triphosphate hydrolases"/>
    <property type="match status" value="1"/>
</dbReference>
<dbReference type="HAMAP" id="MF_03121">
    <property type="entry name" value="lonp2_euk"/>
    <property type="match status" value="1"/>
</dbReference>
<dbReference type="InterPro" id="IPR003593">
    <property type="entry name" value="AAA+_ATPase"/>
</dbReference>
<dbReference type="InterPro" id="IPR003959">
    <property type="entry name" value="ATPase_AAA_core"/>
</dbReference>
<dbReference type="InterPro" id="IPR004815">
    <property type="entry name" value="Lon_bac/euk-typ"/>
</dbReference>
<dbReference type="InterPro" id="IPR054594">
    <property type="entry name" value="Lon_lid"/>
</dbReference>
<dbReference type="InterPro" id="IPR008269">
    <property type="entry name" value="Lon_proteolytic"/>
</dbReference>
<dbReference type="InterPro" id="IPR027065">
    <property type="entry name" value="Lon_Prtase"/>
</dbReference>
<dbReference type="InterPro" id="IPR003111">
    <property type="entry name" value="Lon_prtase_N"/>
</dbReference>
<dbReference type="InterPro" id="IPR046336">
    <property type="entry name" value="Lon_prtase_N_sf"/>
</dbReference>
<dbReference type="InterPro" id="IPR027501">
    <property type="entry name" value="Lonp2_euk"/>
</dbReference>
<dbReference type="InterPro" id="IPR027417">
    <property type="entry name" value="P-loop_NTPase"/>
</dbReference>
<dbReference type="InterPro" id="IPR008268">
    <property type="entry name" value="Peptidase_S16_AS"/>
</dbReference>
<dbReference type="InterPro" id="IPR015947">
    <property type="entry name" value="PUA-like_sf"/>
</dbReference>
<dbReference type="InterPro" id="IPR020568">
    <property type="entry name" value="Ribosomal_Su5_D2-typ_SF"/>
</dbReference>
<dbReference type="InterPro" id="IPR014721">
    <property type="entry name" value="Ribsml_uS5_D2-typ_fold_subgr"/>
</dbReference>
<dbReference type="NCBIfam" id="TIGR00763">
    <property type="entry name" value="lon"/>
    <property type="match status" value="1"/>
</dbReference>
<dbReference type="PANTHER" id="PTHR10046">
    <property type="entry name" value="ATP DEPENDENT LON PROTEASE FAMILY MEMBER"/>
    <property type="match status" value="1"/>
</dbReference>
<dbReference type="Pfam" id="PF00004">
    <property type="entry name" value="AAA"/>
    <property type="match status" value="1"/>
</dbReference>
<dbReference type="Pfam" id="PF05362">
    <property type="entry name" value="Lon_C"/>
    <property type="match status" value="1"/>
</dbReference>
<dbReference type="Pfam" id="PF22667">
    <property type="entry name" value="Lon_lid"/>
    <property type="match status" value="1"/>
</dbReference>
<dbReference type="Pfam" id="PF02190">
    <property type="entry name" value="LON_substr_bdg"/>
    <property type="match status" value="1"/>
</dbReference>
<dbReference type="PIRSF" id="PIRSF001174">
    <property type="entry name" value="Lon_proteas"/>
    <property type="match status" value="1"/>
</dbReference>
<dbReference type="PRINTS" id="PR00830">
    <property type="entry name" value="ENDOLAPTASE"/>
</dbReference>
<dbReference type="SMART" id="SM00382">
    <property type="entry name" value="AAA"/>
    <property type="match status" value="1"/>
</dbReference>
<dbReference type="SMART" id="SM00464">
    <property type="entry name" value="LON"/>
    <property type="match status" value="1"/>
</dbReference>
<dbReference type="SUPFAM" id="SSF52540">
    <property type="entry name" value="P-loop containing nucleoside triphosphate hydrolases"/>
    <property type="match status" value="1"/>
</dbReference>
<dbReference type="SUPFAM" id="SSF88697">
    <property type="entry name" value="PUA domain-like"/>
    <property type="match status" value="1"/>
</dbReference>
<dbReference type="SUPFAM" id="SSF54211">
    <property type="entry name" value="Ribosomal protein S5 domain 2-like"/>
    <property type="match status" value="1"/>
</dbReference>
<dbReference type="PROSITE" id="PS51787">
    <property type="entry name" value="LON_N"/>
    <property type="match status" value="1"/>
</dbReference>
<dbReference type="PROSITE" id="PS51786">
    <property type="entry name" value="LON_PROTEOLYTIC"/>
    <property type="match status" value="1"/>
</dbReference>
<dbReference type="PROSITE" id="PS01046">
    <property type="entry name" value="LON_SER"/>
    <property type="match status" value="1"/>
</dbReference>
<keyword id="KW-0067">ATP-binding</keyword>
<keyword id="KW-0378">Hydrolase</keyword>
<keyword id="KW-0547">Nucleotide-binding</keyword>
<keyword id="KW-0576">Peroxisome</keyword>
<keyword id="KW-0645">Protease</keyword>
<keyword id="KW-1185">Reference proteome</keyword>
<keyword id="KW-0720">Serine protease</keyword>
<proteinExistence type="evidence at transcript level"/>
<accession>Q5PQY6</accession>
<reference key="1">
    <citation type="submission" date="2004-12" db="EMBL/GenBank/DDBJ databases">
        <authorList>
            <consortium name="NIH - Zebrafish Gene Collection (ZGC) project"/>
        </authorList>
    </citation>
    <scope>NUCLEOTIDE SEQUENCE [LARGE SCALE MRNA]</scope>
    <source>
        <strain>AB</strain>
    </source>
</reference>
<sequence length="840" mass="92221">MSSNSGIQIPSRLPLLCTHDGVLLPGSTMRVSVDTARNMQLVKSRLLKGTSLKSTIIGVIPNTRDPEHDSDELPSLHSIGTAGLAVQVVGSNWPKPHYTLLITGLCRFRVSQLLRERPFPVAEVEQLDKLEQYTEGDPADGELGELSQRFYQAAVQLVGMLDMSVPVVAKLRRLLDSLPKETLPDVLAAMIRTSNKEKLQVLDAVDLEERFKKALPLLTRQIEGLKLLQKTRKLRPDDDKRVLSIRKGGVFPGRQFSLDEEVEDEDSDDTALLERKVKAAAMPEAALRVCLKELRRLKKMPQSMPEYALTRNYLEMMVELPWSKSTTDCLDIRAARVLLDNDHYAMEKLKKRVLEYLAVRQLKSTLKGPILCFVGPPGVGKTSVGRSIARTLGREFHRIALGGVCDQSDIRGHRRTYVGSMPGRIINGLKTVGVNNPVFLLDEVDKLGKSLQGDPAAALLEVLDPEQNHSFTDHYLNVPFDLSQVLFIATANTTATIPPALLDRMEVLQVPGYTQEEKVEIAHRHLIPHQLEQHGLTPQQLQIPQDTTLQIISKYTREAGVRSLERKIGAVCRAVAVKVAEGQKVSRSEAPTEQHAEQNTDSKVEDSGIAAPPEMPIVIDHVALKDILGPPLFEMEVSERLTLPGVAIGLAWTPMGGEIMFVEASRMEGEGQLTLTGQLGDVMKESAHLAISWLRSNAKTYLLNDGSADLLEGTDIHLHFPAGAVTKDGPSAGVTIVTCLASLLSGRLVRSDVAMTGEITLRGLVLPVGGIKDKVLAAHRANLKRIIIPKRNEKDLEEIPANVRADLDFVLAGTLDEVLNAAFDGGFPSAVNHPQVLSKL</sequence>
<name>LONP2_DANRE</name>
<feature type="chain" id="PRO_0000287644" description="Lon protease homolog 2, peroxisomal">
    <location>
        <begin position="1"/>
        <end position="840"/>
    </location>
</feature>
<feature type="domain" description="Lon N-terminal" evidence="3">
    <location>
        <begin position="13"/>
        <end position="222"/>
    </location>
</feature>
<feature type="domain" description="Lon proteolytic" evidence="2">
    <location>
        <begin position="641"/>
        <end position="825"/>
    </location>
</feature>
<feature type="region of interest" description="Disordered" evidence="4">
    <location>
        <begin position="583"/>
        <end position="606"/>
    </location>
</feature>
<feature type="short sequence motif" description="Microbody targeting signal" evidence="1">
    <location>
        <begin position="838"/>
        <end position="840"/>
    </location>
</feature>
<feature type="compositionally biased region" description="Basic and acidic residues" evidence="4">
    <location>
        <begin position="584"/>
        <end position="606"/>
    </location>
</feature>
<feature type="active site" evidence="1">
    <location>
        <position position="731"/>
    </location>
</feature>
<feature type="active site" evidence="1">
    <location>
        <position position="774"/>
    </location>
</feature>
<feature type="binding site" evidence="1">
    <location>
        <begin position="375"/>
        <end position="382"/>
    </location>
    <ligand>
        <name>ATP</name>
        <dbReference type="ChEBI" id="CHEBI:30616"/>
    </ligand>
</feature>